<gene>
    <name evidence="1" type="primary">clpP</name>
    <name type="ordered locus">Asuc_0766</name>
</gene>
<proteinExistence type="inferred from homology"/>
<comment type="function">
    <text evidence="1">Cleaves peptides in various proteins in a process that requires ATP hydrolysis. Has a chymotrypsin-like activity. Plays a major role in the degradation of misfolded proteins.</text>
</comment>
<comment type="catalytic activity">
    <reaction evidence="1">
        <text>Hydrolysis of proteins to small peptides in the presence of ATP and magnesium. alpha-casein is the usual test substrate. In the absence of ATP, only oligopeptides shorter than five residues are hydrolyzed (such as succinyl-Leu-Tyr-|-NHMec, and Leu-Tyr-Leu-|-Tyr-Trp, in which cleavage of the -Tyr-|-Leu- and -Tyr-|-Trp bonds also occurs).</text>
        <dbReference type="EC" id="3.4.21.92"/>
    </reaction>
</comment>
<comment type="subunit">
    <text evidence="1">Fourteen ClpP subunits assemble into 2 heptameric rings which stack back to back to give a disk-like structure with a central cavity, resembling the structure of eukaryotic proteasomes.</text>
</comment>
<comment type="subcellular location">
    <subcellularLocation>
        <location evidence="1">Cytoplasm</location>
    </subcellularLocation>
</comment>
<comment type="similarity">
    <text evidence="1">Belongs to the peptidase S14 family.</text>
</comment>
<dbReference type="EC" id="3.4.21.92" evidence="1"/>
<dbReference type="EMBL" id="CP000746">
    <property type="protein sequence ID" value="ABR74138.1"/>
    <property type="molecule type" value="Genomic_DNA"/>
</dbReference>
<dbReference type="RefSeq" id="WP_012072516.1">
    <property type="nucleotide sequence ID" value="NC_009655.1"/>
</dbReference>
<dbReference type="SMR" id="A6VME1"/>
<dbReference type="STRING" id="339671.Asuc_0766"/>
<dbReference type="MEROPS" id="S14.001"/>
<dbReference type="KEGG" id="asu:Asuc_0766"/>
<dbReference type="eggNOG" id="COG0740">
    <property type="taxonomic scope" value="Bacteria"/>
</dbReference>
<dbReference type="HOGENOM" id="CLU_058707_3_2_6"/>
<dbReference type="OrthoDB" id="9802800at2"/>
<dbReference type="Proteomes" id="UP000001114">
    <property type="component" value="Chromosome"/>
</dbReference>
<dbReference type="GO" id="GO:0005737">
    <property type="term" value="C:cytoplasm"/>
    <property type="evidence" value="ECO:0007669"/>
    <property type="project" value="UniProtKB-SubCell"/>
</dbReference>
<dbReference type="GO" id="GO:0009368">
    <property type="term" value="C:endopeptidase Clp complex"/>
    <property type="evidence" value="ECO:0007669"/>
    <property type="project" value="TreeGrafter"/>
</dbReference>
<dbReference type="GO" id="GO:0004176">
    <property type="term" value="F:ATP-dependent peptidase activity"/>
    <property type="evidence" value="ECO:0007669"/>
    <property type="project" value="InterPro"/>
</dbReference>
<dbReference type="GO" id="GO:0051117">
    <property type="term" value="F:ATPase binding"/>
    <property type="evidence" value="ECO:0007669"/>
    <property type="project" value="TreeGrafter"/>
</dbReference>
<dbReference type="GO" id="GO:0004252">
    <property type="term" value="F:serine-type endopeptidase activity"/>
    <property type="evidence" value="ECO:0007669"/>
    <property type="project" value="UniProtKB-UniRule"/>
</dbReference>
<dbReference type="GO" id="GO:0006515">
    <property type="term" value="P:protein quality control for misfolded or incompletely synthesized proteins"/>
    <property type="evidence" value="ECO:0007669"/>
    <property type="project" value="TreeGrafter"/>
</dbReference>
<dbReference type="CDD" id="cd07017">
    <property type="entry name" value="S14_ClpP_2"/>
    <property type="match status" value="1"/>
</dbReference>
<dbReference type="FunFam" id="3.90.226.10:FF:000001">
    <property type="entry name" value="ATP-dependent Clp protease proteolytic subunit"/>
    <property type="match status" value="1"/>
</dbReference>
<dbReference type="Gene3D" id="3.90.226.10">
    <property type="entry name" value="2-enoyl-CoA Hydratase, Chain A, domain 1"/>
    <property type="match status" value="1"/>
</dbReference>
<dbReference type="HAMAP" id="MF_00444">
    <property type="entry name" value="ClpP"/>
    <property type="match status" value="1"/>
</dbReference>
<dbReference type="InterPro" id="IPR001907">
    <property type="entry name" value="ClpP"/>
</dbReference>
<dbReference type="InterPro" id="IPR029045">
    <property type="entry name" value="ClpP/crotonase-like_dom_sf"/>
</dbReference>
<dbReference type="InterPro" id="IPR023562">
    <property type="entry name" value="ClpP/TepA"/>
</dbReference>
<dbReference type="InterPro" id="IPR033135">
    <property type="entry name" value="ClpP_His_AS"/>
</dbReference>
<dbReference type="InterPro" id="IPR018215">
    <property type="entry name" value="ClpP_Ser_AS"/>
</dbReference>
<dbReference type="NCBIfam" id="TIGR00493">
    <property type="entry name" value="clpP"/>
    <property type="match status" value="1"/>
</dbReference>
<dbReference type="NCBIfam" id="NF001368">
    <property type="entry name" value="PRK00277.1"/>
    <property type="match status" value="1"/>
</dbReference>
<dbReference type="NCBIfam" id="NF009205">
    <property type="entry name" value="PRK12553.1"/>
    <property type="match status" value="1"/>
</dbReference>
<dbReference type="PANTHER" id="PTHR10381">
    <property type="entry name" value="ATP-DEPENDENT CLP PROTEASE PROTEOLYTIC SUBUNIT"/>
    <property type="match status" value="1"/>
</dbReference>
<dbReference type="PANTHER" id="PTHR10381:SF70">
    <property type="entry name" value="ATP-DEPENDENT CLP PROTEASE PROTEOLYTIC SUBUNIT"/>
    <property type="match status" value="1"/>
</dbReference>
<dbReference type="Pfam" id="PF00574">
    <property type="entry name" value="CLP_protease"/>
    <property type="match status" value="1"/>
</dbReference>
<dbReference type="PRINTS" id="PR00127">
    <property type="entry name" value="CLPPROTEASEP"/>
</dbReference>
<dbReference type="SUPFAM" id="SSF52096">
    <property type="entry name" value="ClpP/crotonase"/>
    <property type="match status" value="1"/>
</dbReference>
<dbReference type="PROSITE" id="PS00382">
    <property type="entry name" value="CLP_PROTEASE_HIS"/>
    <property type="match status" value="1"/>
</dbReference>
<dbReference type="PROSITE" id="PS00381">
    <property type="entry name" value="CLP_PROTEASE_SER"/>
    <property type="match status" value="1"/>
</dbReference>
<accession>A6VME1</accession>
<organism>
    <name type="scientific">Actinobacillus succinogenes (strain ATCC 55618 / DSM 22257 / CCUG 43843 / 130Z)</name>
    <dbReference type="NCBI Taxonomy" id="339671"/>
    <lineage>
        <taxon>Bacteria</taxon>
        <taxon>Pseudomonadati</taxon>
        <taxon>Pseudomonadota</taxon>
        <taxon>Gammaproteobacteria</taxon>
        <taxon>Pasteurellales</taxon>
        <taxon>Pasteurellaceae</taxon>
        <taxon>Actinobacillus</taxon>
    </lineage>
</organism>
<keyword id="KW-0963">Cytoplasm</keyword>
<keyword id="KW-0378">Hydrolase</keyword>
<keyword id="KW-0645">Protease</keyword>
<keyword id="KW-1185">Reference proteome</keyword>
<keyword id="KW-0720">Serine protease</keyword>
<sequence length="194" mass="21413">MALVPMVIEQTSRGERSYDIYSRLLKERVIFLSGEVEDNMANLIVAQLLFLESEDPDKDINLYINSPGGSVTAGMAIYDTMQFIKPDVRTLCIGQACSMGAFLLAGGAAGKRAALPNARVMIHQPLGGFRGQASDIQIHAQEILKIKHTLNERLAFHSGQPLEQIEKDTDRDNFMSAEEAQNYGLIDSVLVKRS</sequence>
<evidence type="ECO:0000255" key="1">
    <source>
        <dbReference type="HAMAP-Rule" id="MF_00444"/>
    </source>
</evidence>
<reference key="1">
    <citation type="journal article" date="2010" name="BMC Genomics">
        <title>A genomic perspective on the potential of Actinobacillus succinogenes for industrial succinate production.</title>
        <authorList>
            <person name="McKinlay J.B."/>
            <person name="Laivenieks M."/>
            <person name="Schindler B.D."/>
            <person name="McKinlay A.A."/>
            <person name="Siddaramappa S."/>
            <person name="Challacombe J.F."/>
            <person name="Lowry S.R."/>
            <person name="Clum A."/>
            <person name="Lapidus A.L."/>
            <person name="Burkhart K.B."/>
            <person name="Harkins V."/>
            <person name="Vieille C."/>
        </authorList>
    </citation>
    <scope>NUCLEOTIDE SEQUENCE [LARGE SCALE GENOMIC DNA]</scope>
    <source>
        <strain>ATCC 55618 / DSM 22257 / CCUG 43843 / 130Z</strain>
    </source>
</reference>
<name>CLPP_ACTSZ</name>
<protein>
    <recommendedName>
        <fullName evidence="1">ATP-dependent Clp protease proteolytic subunit</fullName>
        <ecNumber evidence="1">3.4.21.92</ecNumber>
    </recommendedName>
    <alternativeName>
        <fullName evidence="1">Endopeptidase Clp</fullName>
    </alternativeName>
</protein>
<feature type="chain" id="PRO_1000072338" description="ATP-dependent Clp protease proteolytic subunit">
    <location>
        <begin position="1"/>
        <end position="194"/>
    </location>
</feature>
<feature type="active site" description="Nucleophile" evidence="1">
    <location>
        <position position="98"/>
    </location>
</feature>
<feature type="active site" evidence="1">
    <location>
        <position position="123"/>
    </location>
</feature>